<evidence type="ECO:0000256" key="1">
    <source>
        <dbReference type="SAM" id="MobiDB-lite"/>
    </source>
</evidence>
<gene>
    <name type="ORF">SPAC6G9.01c</name>
</gene>
<feature type="chain" id="PRO_0000116626" description="Uncharacterized protein C6G9.01c">
    <location>
        <begin position="1"/>
        <end position="95"/>
    </location>
</feature>
<feature type="region of interest" description="Disordered" evidence="1">
    <location>
        <begin position="1"/>
        <end position="64"/>
    </location>
</feature>
<feature type="compositionally biased region" description="Basic and acidic residues" evidence="1">
    <location>
        <begin position="18"/>
        <end position="28"/>
    </location>
</feature>
<feature type="compositionally biased region" description="Polar residues" evidence="1">
    <location>
        <begin position="35"/>
        <end position="49"/>
    </location>
</feature>
<organism>
    <name type="scientific">Schizosaccharomyces pombe (strain 972 / ATCC 24843)</name>
    <name type="common">Fission yeast</name>
    <dbReference type="NCBI Taxonomy" id="284812"/>
    <lineage>
        <taxon>Eukaryota</taxon>
        <taxon>Fungi</taxon>
        <taxon>Dikarya</taxon>
        <taxon>Ascomycota</taxon>
        <taxon>Taphrinomycotina</taxon>
        <taxon>Schizosaccharomycetes</taxon>
        <taxon>Schizosaccharomycetales</taxon>
        <taxon>Schizosaccharomycetaceae</taxon>
        <taxon>Schizosaccharomyces</taxon>
    </lineage>
</organism>
<reference key="1">
    <citation type="journal article" date="2002" name="Nature">
        <title>The genome sequence of Schizosaccharomyces pombe.</title>
        <authorList>
            <person name="Wood V."/>
            <person name="Gwilliam R."/>
            <person name="Rajandream M.A."/>
            <person name="Lyne M.H."/>
            <person name="Lyne R."/>
            <person name="Stewart A."/>
            <person name="Sgouros J.G."/>
            <person name="Peat N."/>
            <person name="Hayles J."/>
            <person name="Baker S.G."/>
            <person name="Basham D."/>
            <person name="Bowman S."/>
            <person name="Brooks K."/>
            <person name="Brown D."/>
            <person name="Brown S."/>
            <person name="Chillingworth T."/>
            <person name="Churcher C.M."/>
            <person name="Collins M."/>
            <person name="Connor R."/>
            <person name="Cronin A."/>
            <person name="Davis P."/>
            <person name="Feltwell T."/>
            <person name="Fraser A."/>
            <person name="Gentles S."/>
            <person name="Goble A."/>
            <person name="Hamlin N."/>
            <person name="Harris D.E."/>
            <person name="Hidalgo J."/>
            <person name="Hodgson G."/>
            <person name="Holroyd S."/>
            <person name="Hornsby T."/>
            <person name="Howarth S."/>
            <person name="Huckle E.J."/>
            <person name="Hunt S."/>
            <person name="Jagels K."/>
            <person name="James K.D."/>
            <person name="Jones L."/>
            <person name="Jones M."/>
            <person name="Leather S."/>
            <person name="McDonald S."/>
            <person name="McLean J."/>
            <person name="Mooney P."/>
            <person name="Moule S."/>
            <person name="Mungall K.L."/>
            <person name="Murphy L.D."/>
            <person name="Niblett D."/>
            <person name="Odell C."/>
            <person name="Oliver K."/>
            <person name="O'Neil S."/>
            <person name="Pearson D."/>
            <person name="Quail M.A."/>
            <person name="Rabbinowitsch E."/>
            <person name="Rutherford K.M."/>
            <person name="Rutter S."/>
            <person name="Saunders D."/>
            <person name="Seeger K."/>
            <person name="Sharp S."/>
            <person name="Skelton J."/>
            <person name="Simmonds M.N."/>
            <person name="Squares R."/>
            <person name="Squares S."/>
            <person name="Stevens K."/>
            <person name="Taylor K."/>
            <person name="Taylor R.G."/>
            <person name="Tivey A."/>
            <person name="Walsh S.V."/>
            <person name="Warren T."/>
            <person name="Whitehead S."/>
            <person name="Woodward J.R."/>
            <person name="Volckaert G."/>
            <person name="Aert R."/>
            <person name="Robben J."/>
            <person name="Grymonprez B."/>
            <person name="Weltjens I."/>
            <person name="Vanstreels E."/>
            <person name="Rieger M."/>
            <person name="Schaefer M."/>
            <person name="Mueller-Auer S."/>
            <person name="Gabel C."/>
            <person name="Fuchs M."/>
            <person name="Duesterhoeft A."/>
            <person name="Fritzc C."/>
            <person name="Holzer E."/>
            <person name="Moestl D."/>
            <person name="Hilbert H."/>
            <person name="Borzym K."/>
            <person name="Langer I."/>
            <person name="Beck A."/>
            <person name="Lehrach H."/>
            <person name="Reinhardt R."/>
            <person name="Pohl T.M."/>
            <person name="Eger P."/>
            <person name="Zimmermann W."/>
            <person name="Wedler H."/>
            <person name="Wambutt R."/>
            <person name="Purnelle B."/>
            <person name="Goffeau A."/>
            <person name="Cadieu E."/>
            <person name="Dreano S."/>
            <person name="Gloux S."/>
            <person name="Lelaure V."/>
            <person name="Mottier S."/>
            <person name="Galibert F."/>
            <person name="Aves S.J."/>
            <person name="Xiang Z."/>
            <person name="Hunt C."/>
            <person name="Moore K."/>
            <person name="Hurst S.M."/>
            <person name="Lucas M."/>
            <person name="Rochet M."/>
            <person name="Gaillardin C."/>
            <person name="Tallada V.A."/>
            <person name="Garzon A."/>
            <person name="Thode G."/>
            <person name="Daga R.R."/>
            <person name="Cruzado L."/>
            <person name="Jimenez J."/>
            <person name="Sanchez M."/>
            <person name="del Rey F."/>
            <person name="Benito J."/>
            <person name="Dominguez A."/>
            <person name="Revuelta J.L."/>
            <person name="Moreno S."/>
            <person name="Armstrong J."/>
            <person name="Forsburg S.L."/>
            <person name="Cerutti L."/>
            <person name="Lowe T."/>
            <person name="McCombie W.R."/>
            <person name="Paulsen I."/>
            <person name="Potashkin J."/>
            <person name="Shpakovski G.V."/>
            <person name="Ussery D."/>
            <person name="Barrell B.G."/>
            <person name="Nurse P."/>
        </authorList>
    </citation>
    <scope>NUCLEOTIDE SEQUENCE [LARGE SCALE GENOMIC DNA]</scope>
    <source>
        <strain>972 / ATCC 24843</strain>
    </source>
</reference>
<sequence>MEIDDIFASKKANPANEKSNDSKSEAKAPKKGAKTKSTPSRPKPTNNQDDLFLDPKGASGRKRTEEGFLVYDEEELNIGQGGGTPDCPFDCQCCF</sequence>
<protein>
    <recommendedName>
        <fullName>Uncharacterized protein C6G9.01c</fullName>
    </recommendedName>
</protein>
<keyword id="KW-1185">Reference proteome</keyword>
<name>YDH1_SCHPO</name>
<accession>Q92346</accession>
<proteinExistence type="predicted"/>
<dbReference type="EMBL" id="CU329670">
    <property type="protein sequence ID" value="CAB03603.2"/>
    <property type="molecule type" value="Genomic_DNA"/>
</dbReference>
<dbReference type="PIR" id="T39063">
    <property type="entry name" value="T39063"/>
</dbReference>
<dbReference type="RefSeq" id="NP_594110.1">
    <property type="nucleotide sequence ID" value="NM_001019534.2"/>
</dbReference>
<dbReference type="BioGRID" id="278395">
    <property type="interactions" value="26"/>
</dbReference>
<dbReference type="iPTMnet" id="Q92346"/>
<dbReference type="SwissPalm" id="Q92346"/>
<dbReference type="PaxDb" id="4896-SPAC6G9.01c.1"/>
<dbReference type="EnsemblFungi" id="SPAC6G9.01c.1">
    <property type="protein sequence ID" value="SPAC6G9.01c.1:pep"/>
    <property type="gene ID" value="SPAC6G9.01c"/>
</dbReference>
<dbReference type="KEGG" id="spo:2541905"/>
<dbReference type="PomBase" id="SPAC6G9.01c"/>
<dbReference type="VEuPathDB" id="FungiDB:SPAC6G9.01c"/>
<dbReference type="eggNOG" id="ENOG502SCT1">
    <property type="taxonomic scope" value="Eukaryota"/>
</dbReference>
<dbReference type="HOGENOM" id="CLU_103523_3_0_1"/>
<dbReference type="InParanoid" id="Q92346"/>
<dbReference type="OMA" id="NLCPFDC"/>
<dbReference type="PRO" id="PR:Q92346"/>
<dbReference type="Proteomes" id="UP000002485">
    <property type="component" value="Chromosome I"/>
</dbReference>
<dbReference type="GO" id="GO:0005829">
    <property type="term" value="C:cytosol"/>
    <property type="evidence" value="ECO:0007005"/>
    <property type="project" value="PomBase"/>
</dbReference>
<dbReference type="GO" id="GO:0005634">
    <property type="term" value="C:nucleus"/>
    <property type="evidence" value="ECO:0007005"/>
    <property type="project" value="PomBase"/>
</dbReference>
<dbReference type="InterPro" id="IPR013885">
    <property type="entry name" value="DUF1764_euk"/>
</dbReference>
<dbReference type="PANTHER" id="PTHR34066:SF1">
    <property type="entry name" value="DUF1764 FAMILY PROTEIN"/>
    <property type="match status" value="1"/>
</dbReference>
<dbReference type="PANTHER" id="PTHR34066">
    <property type="entry name" value="GROWTH FACTOR 2"/>
    <property type="match status" value="1"/>
</dbReference>
<dbReference type="Pfam" id="PF08576">
    <property type="entry name" value="DUF1764"/>
    <property type="match status" value="1"/>
</dbReference>